<name>RAB9B_PONAB</name>
<organism>
    <name type="scientific">Pongo abelii</name>
    <name type="common">Sumatran orangutan</name>
    <name type="synonym">Pongo pygmaeus abelii</name>
    <dbReference type="NCBI Taxonomy" id="9601"/>
    <lineage>
        <taxon>Eukaryota</taxon>
        <taxon>Metazoa</taxon>
        <taxon>Chordata</taxon>
        <taxon>Craniata</taxon>
        <taxon>Vertebrata</taxon>
        <taxon>Euteleostomi</taxon>
        <taxon>Mammalia</taxon>
        <taxon>Eutheria</taxon>
        <taxon>Euarchontoglires</taxon>
        <taxon>Primates</taxon>
        <taxon>Haplorrhini</taxon>
        <taxon>Catarrhini</taxon>
        <taxon>Hominidae</taxon>
        <taxon>Pongo</taxon>
    </lineage>
</organism>
<comment type="function">
    <text evidence="2 3 5">The small GTPases Rab are key regulators of intracellular membrane trafficking, from the formation of transport vesicles to their fusion with membranes. Rabs cycle between an inactive GDP-bound form and an active GTP-bound form that is able to recruit to membranes different sets of downstream effectors directly responsible for vesicle formation, movement, tethering and fusion (By similarity). RAB9B is involved in the transport of proteins between the endosomes and the trans Golgi network (By similarity). May use NDE1/NDEL1 as an effector to interact with the dynein motor complex in order to control retrograde trafficking of RAB9-associated late endosomes to the TGN (By similarity).</text>
</comment>
<comment type="catalytic activity">
    <reaction evidence="3">
        <text>GTP + H2O = GDP + phosphate + H(+)</text>
        <dbReference type="Rhea" id="RHEA:19669"/>
        <dbReference type="ChEBI" id="CHEBI:15377"/>
        <dbReference type="ChEBI" id="CHEBI:15378"/>
        <dbReference type="ChEBI" id="CHEBI:37565"/>
        <dbReference type="ChEBI" id="CHEBI:43474"/>
        <dbReference type="ChEBI" id="CHEBI:58189"/>
        <dbReference type="EC" id="3.6.5.2"/>
    </reaction>
    <physiologicalReaction direction="left-to-right" evidence="3">
        <dbReference type="Rhea" id="RHEA:19670"/>
    </physiologicalReaction>
</comment>
<comment type="cofactor">
    <cofactor evidence="5">
        <name>Mg(2+)</name>
        <dbReference type="ChEBI" id="CHEBI:18420"/>
    </cofactor>
</comment>
<comment type="activity regulation">
    <text evidence="6">Regulated by guanine nucleotide exchange factors (GEFs) which promote the exchange of bound GDP for free GTP. Regulated by GTPase activating proteins (GAPs) which increase the GTP hydrolysis activity. Inhibited by GDP dissociation inhibitors (GDIs).</text>
</comment>
<comment type="subunit">
    <text evidence="5">Interacts (GTP-bound form) with SGSM1; the GDP-bound form has much lower affinity for SGSM1. The GTP-bound form but not the GDP-bound form interacts with HPS4 and the BLOC-3 complex (heterodimer of HPS1 and HPS4) but does not interact with HPS1 alone. Interacts (GTP-bound form) with NDE1.</text>
</comment>
<comment type="subcellular location">
    <subcellularLocation>
        <location evidence="6">Cell membrane</location>
        <topology evidence="6">Lipid-anchor</topology>
        <orientation evidence="6">Cytoplasmic side</orientation>
    </subcellularLocation>
    <subcellularLocation>
        <location evidence="1">Cytoplasmic vesicle</location>
        <location evidence="1">Phagosome membrane</location>
        <topology evidence="1">Lipid-anchor</topology>
        <orientation evidence="1">Cytoplasmic side</orientation>
    </subcellularLocation>
    <text evidence="1">Recruited to phagosomes containing S.aureus or Mycobacterium.</text>
</comment>
<comment type="domain">
    <text evidence="2">Switch 1, switch 2 and the interswitch regions are characteristic of Rab GTPases and mediate the interactions with Rab downstream effectors. The switch regions undergo conformational changes upon nucleotide binding which drives interaction with specific sets of effector proteins, with most effectors only binding to GTP-bound Rab.</text>
</comment>
<comment type="similarity">
    <text evidence="6">Belongs to the small GTPase superfamily. Rab family.</text>
</comment>
<keyword id="KW-1003">Cell membrane</keyword>
<keyword id="KW-0968">Cytoplasmic vesicle</keyword>
<keyword id="KW-0342">GTP-binding</keyword>
<keyword id="KW-0378">Hydrolase</keyword>
<keyword id="KW-0449">Lipoprotein</keyword>
<keyword id="KW-0460">Magnesium</keyword>
<keyword id="KW-0472">Membrane</keyword>
<keyword id="KW-0479">Metal-binding</keyword>
<keyword id="KW-0547">Nucleotide-binding</keyword>
<keyword id="KW-0597">Phosphoprotein</keyword>
<keyword id="KW-0636">Prenylation</keyword>
<keyword id="KW-0653">Protein transport</keyword>
<keyword id="KW-1185">Reference proteome</keyword>
<keyword id="KW-0813">Transport</keyword>
<proteinExistence type="evidence at transcript level"/>
<dbReference type="EC" id="3.6.5.2" evidence="3"/>
<dbReference type="EMBL" id="CR861121">
    <property type="protein sequence ID" value="CAH93197.1"/>
    <property type="molecule type" value="mRNA"/>
</dbReference>
<dbReference type="RefSeq" id="NP_001126880.1">
    <property type="nucleotide sequence ID" value="NM_001133408.1"/>
</dbReference>
<dbReference type="SMR" id="Q5R4W9"/>
<dbReference type="FunCoup" id="Q5R4W9">
    <property type="interactions" value="629"/>
</dbReference>
<dbReference type="STRING" id="9601.ENSPPYP00000023047"/>
<dbReference type="Ensembl" id="ENSPPYT00000024017.2">
    <property type="protein sequence ID" value="ENSPPYP00000023047.1"/>
    <property type="gene ID" value="ENSPPYG00000020591.2"/>
</dbReference>
<dbReference type="GeneID" id="100173893"/>
<dbReference type="KEGG" id="pon:100173893"/>
<dbReference type="CTD" id="51209"/>
<dbReference type="eggNOG" id="KOG0394">
    <property type="taxonomic scope" value="Eukaryota"/>
</dbReference>
<dbReference type="GeneTree" id="ENSGT00940000160481"/>
<dbReference type="HOGENOM" id="CLU_041217_10_6_1"/>
<dbReference type="InParanoid" id="Q5R4W9"/>
<dbReference type="OMA" id="AKAWCME"/>
<dbReference type="OrthoDB" id="1436450at2759"/>
<dbReference type="TreeFam" id="TF326442"/>
<dbReference type="Proteomes" id="UP000001595">
    <property type="component" value="Chromosome X"/>
</dbReference>
<dbReference type="GO" id="GO:0005829">
    <property type="term" value="C:cytosol"/>
    <property type="evidence" value="ECO:0007669"/>
    <property type="project" value="GOC"/>
</dbReference>
<dbReference type="GO" id="GO:0005770">
    <property type="term" value="C:late endosome"/>
    <property type="evidence" value="ECO:0007669"/>
    <property type="project" value="TreeGrafter"/>
</dbReference>
<dbReference type="GO" id="GO:0005764">
    <property type="term" value="C:lysosome"/>
    <property type="evidence" value="ECO:0007669"/>
    <property type="project" value="TreeGrafter"/>
</dbReference>
<dbReference type="GO" id="GO:0045335">
    <property type="term" value="C:phagocytic vesicle"/>
    <property type="evidence" value="ECO:0000250"/>
    <property type="project" value="UniProtKB"/>
</dbReference>
<dbReference type="GO" id="GO:0030670">
    <property type="term" value="C:phagocytic vesicle membrane"/>
    <property type="evidence" value="ECO:0007669"/>
    <property type="project" value="UniProtKB-SubCell"/>
</dbReference>
<dbReference type="GO" id="GO:0005886">
    <property type="term" value="C:plasma membrane"/>
    <property type="evidence" value="ECO:0007669"/>
    <property type="project" value="UniProtKB-SubCell"/>
</dbReference>
<dbReference type="GO" id="GO:0003925">
    <property type="term" value="F:G protein activity"/>
    <property type="evidence" value="ECO:0007669"/>
    <property type="project" value="Ensembl"/>
</dbReference>
<dbReference type="GO" id="GO:0019003">
    <property type="term" value="F:GDP binding"/>
    <property type="evidence" value="ECO:0000250"/>
    <property type="project" value="UniProtKB"/>
</dbReference>
<dbReference type="GO" id="GO:0005525">
    <property type="term" value="F:GTP binding"/>
    <property type="evidence" value="ECO:0007669"/>
    <property type="project" value="UniProtKB-KW"/>
</dbReference>
<dbReference type="GO" id="GO:0042802">
    <property type="term" value="F:identical protein binding"/>
    <property type="evidence" value="ECO:0007669"/>
    <property type="project" value="Ensembl"/>
</dbReference>
<dbReference type="GO" id="GO:0015031">
    <property type="term" value="P:protein transport"/>
    <property type="evidence" value="ECO:0007669"/>
    <property type="project" value="UniProtKB-KW"/>
</dbReference>
<dbReference type="GO" id="GO:0032482">
    <property type="term" value="P:Rab protein signal transduction"/>
    <property type="evidence" value="ECO:0007669"/>
    <property type="project" value="InterPro"/>
</dbReference>
<dbReference type="GO" id="GO:0006898">
    <property type="term" value="P:receptor-mediated endocytosis"/>
    <property type="evidence" value="ECO:0007669"/>
    <property type="project" value="Ensembl"/>
</dbReference>
<dbReference type="GO" id="GO:0042147">
    <property type="term" value="P:retrograde transport, endosome to Golgi"/>
    <property type="evidence" value="ECO:0007669"/>
    <property type="project" value="TreeGrafter"/>
</dbReference>
<dbReference type="CDD" id="cd04116">
    <property type="entry name" value="Rab9"/>
    <property type="match status" value="1"/>
</dbReference>
<dbReference type="FunFam" id="3.40.50.300:FF:000360">
    <property type="entry name" value="RAB9B, member RAS oncogene family"/>
    <property type="match status" value="1"/>
</dbReference>
<dbReference type="Gene3D" id="3.40.50.300">
    <property type="entry name" value="P-loop containing nucleotide triphosphate hydrolases"/>
    <property type="match status" value="1"/>
</dbReference>
<dbReference type="InterPro" id="IPR027417">
    <property type="entry name" value="P-loop_NTPase"/>
</dbReference>
<dbReference type="InterPro" id="IPR041824">
    <property type="entry name" value="Rab9"/>
</dbReference>
<dbReference type="InterPro" id="IPR005225">
    <property type="entry name" value="Small_GTP-bd"/>
</dbReference>
<dbReference type="InterPro" id="IPR001806">
    <property type="entry name" value="Small_GTPase"/>
</dbReference>
<dbReference type="NCBIfam" id="TIGR00231">
    <property type="entry name" value="small_GTP"/>
    <property type="match status" value="1"/>
</dbReference>
<dbReference type="PANTHER" id="PTHR47981">
    <property type="entry name" value="RAB FAMILY"/>
    <property type="match status" value="1"/>
</dbReference>
<dbReference type="PANTHER" id="PTHR47981:SF17">
    <property type="entry name" value="RAS-RELATED PROTEIN RAB-9B"/>
    <property type="match status" value="1"/>
</dbReference>
<dbReference type="Pfam" id="PF00071">
    <property type="entry name" value="Ras"/>
    <property type="match status" value="1"/>
</dbReference>
<dbReference type="PRINTS" id="PR00449">
    <property type="entry name" value="RASTRNSFRMNG"/>
</dbReference>
<dbReference type="SMART" id="SM00175">
    <property type="entry name" value="RAB"/>
    <property type="match status" value="1"/>
</dbReference>
<dbReference type="SMART" id="SM00176">
    <property type="entry name" value="RAN"/>
    <property type="match status" value="1"/>
</dbReference>
<dbReference type="SMART" id="SM00173">
    <property type="entry name" value="RAS"/>
    <property type="match status" value="1"/>
</dbReference>
<dbReference type="SMART" id="SM00174">
    <property type="entry name" value="RHO"/>
    <property type="match status" value="1"/>
</dbReference>
<dbReference type="SUPFAM" id="SSF52540">
    <property type="entry name" value="P-loop containing nucleoside triphosphate hydrolases"/>
    <property type="match status" value="1"/>
</dbReference>
<dbReference type="PROSITE" id="PS51419">
    <property type="entry name" value="RAB"/>
    <property type="match status" value="1"/>
</dbReference>
<protein>
    <recommendedName>
        <fullName>Ras-related protein Rab-9B</fullName>
        <ecNumber evidence="3">3.6.5.2</ecNumber>
    </recommendedName>
</protein>
<reference key="1">
    <citation type="submission" date="2004-11" db="EMBL/GenBank/DDBJ databases">
        <authorList>
            <consortium name="The German cDNA consortium"/>
        </authorList>
    </citation>
    <scope>NUCLEOTIDE SEQUENCE [LARGE SCALE MRNA]</scope>
    <source>
        <tissue>Brain cortex</tissue>
    </source>
</reference>
<accession>Q5R4W9</accession>
<gene>
    <name type="primary">RAB9B</name>
</gene>
<feature type="chain" id="PRO_0000121144" description="Ras-related protein Rab-9B">
    <location>
        <begin position="1"/>
        <end position="201"/>
    </location>
</feature>
<feature type="short sequence motif" description="Switch 1" evidence="2">
    <location>
        <begin position="31"/>
        <end position="42"/>
    </location>
</feature>
<feature type="short sequence motif" description="Switch 2" evidence="2">
    <location>
        <begin position="64"/>
        <end position="78"/>
    </location>
</feature>
<feature type="binding site" evidence="5">
    <location>
        <position position="18"/>
    </location>
    <ligand>
        <name>GTP</name>
        <dbReference type="ChEBI" id="CHEBI:37565"/>
    </ligand>
</feature>
<feature type="binding site" evidence="5">
    <location>
        <position position="19"/>
    </location>
    <ligand>
        <name>GTP</name>
        <dbReference type="ChEBI" id="CHEBI:37565"/>
    </ligand>
</feature>
<feature type="binding site" evidence="5">
    <location>
        <position position="20"/>
    </location>
    <ligand>
        <name>GTP</name>
        <dbReference type="ChEBI" id="CHEBI:37565"/>
    </ligand>
</feature>
<feature type="binding site" evidence="5">
    <location>
        <position position="21"/>
    </location>
    <ligand>
        <name>GTP</name>
        <dbReference type="ChEBI" id="CHEBI:37565"/>
    </ligand>
</feature>
<feature type="binding site" evidence="5">
    <location>
        <position position="21"/>
    </location>
    <ligand>
        <name>Mg(2+)</name>
        <dbReference type="ChEBI" id="CHEBI:18420"/>
    </ligand>
</feature>
<feature type="binding site" evidence="5">
    <location>
        <position position="22"/>
    </location>
    <ligand>
        <name>GTP</name>
        <dbReference type="ChEBI" id="CHEBI:37565"/>
    </ligand>
</feature>
<feature type="binding site" evidence="5">
    <location>
        <position position="33"/>
    </location>
    <ligand>
        <name>GTP</name>
        <dbReference type="ChEBI" id="CHEBI:37565"/>
    </ligand>
</feature>
<feature type="binding site" evidence="5">
    <location>
        <position position="34"/>
    </location>
    <ligand>
        <name>GTP</name>
        <dbReference type="ChEBI" id="CHEBI:37565"/>
    </ligand>
</feature>
<feature type="binding site" evidence="5">
    <location>
        <position position="36"/>
    </location>
    <ligand>
        <name>GTP</name>
        <dbReference type="ChEBI" id="CHEBI:37565"/>
    </ligand>
</feature>
<feature type="binding site" evidence="5">
    <location>
        <position position="38"/>
    </location>
    <ligand>
        <name>GTP</name>
        <dbReference type="ChEBI" id="CHEBI:37565"/>
    </ligand>
</feature>
<feature type="binding site" evidence="5">
    <location>
        <position position="39"/>
    </location>
    <ligand>
        <name>GTP</name>
        <dbReference type="ChEBI" id="CHEBI:37565"/>
    </ligand>
</feature>
<feature type="binding site" evidence="5">
    <location>
        <position position="39"/>
    </location>
    <ligand>
        <name>Mg(2+)</name>
        <dbReference type="ChEBI" id="CHEBI:18420"/>
    </ligand>
</feature>
<feature type="binding site" evidence="5">
    <location>
        <position position="62"/>
    </location>
    <ligand>
        <name>Mg(2+)</name>
        <dbReference type="ChEBI" id="CHEBI:18420"/>
    </ligand>
</feature>
<feature type="binding site" evidence="5">
    <location>
        <position position="65"/>
    </location>
    <ligand>
        <name>GTP</name>
        <dbReference type="ChEBI" id="CHEBI:37565"/>
    </ligand>
</feature>
<feature type="binding site" evidence="5">
    <location>
        <position position="124"/>
    </location>
    <ligand>
        <name>GTP</name>
        <dbReference type="ChEBI" id="CHEBI:37565"/>
    </ligand>
</feature>
<feature type="binding site" evidence="5">
    <location>
        <position position="125"/>
    </location>
    <ligand>
        <name>GTP</name>
        <dbReference type="ChEBI" id="CHEBI:37565"/>
    </ligand>
</feature>
<feature type="binding site" evidence="5">
    <location>
        <position position="155"/>
    </location>
    <ligand>
        <name>GTP</name>
        <dbReference type="ChEBI" id="CHEBI:37565"/>
    </ligand>
</feature>
<feature type="binding site" evidence="5">
    <location>
        <position position="156"/>
    </location>
    <ligand>
        <name>GTP</name>
        <dbReference type="ChEBI" id="CHEBI:37565"/>
    </ligand>
</feature>
<feature type="modified residue" description="Phosphoserine" evidence="4">
    <location>
        <position position="34"/>
    </location>
</feature>
<feature type="lipid moiety-binding region" description="S-geranylgeranyl cysteine" evidence="1">
    <location>
        <position position="200"/>
    </location>
</feature>
<feature type="lipid moiety-binding region" description="S-geranylgeranyl cysteine" evidence="1">
    <location>
        <position position="201"/>
    </location>
</feature>
<sequence>MSGKSLLLKVILLGDGGVGKSSLMNRYVTNKFDSQAFHTIGVEFLNRDLEVDGRFVTLQIWDTAGQERFKSLRTPFYRGADCCLLTFSVDDRQSFENLGNWQKEFIYYADVKDPEHFPFVVLGNKVDKEDRQVTTEEAQAWCMENGDYPYLETSAKDDTNVTVAFEEAVRQVLAVEEQLEHCMLGHTIDLNSGSKAGSSCC</sequence>
<evidence type="ECO:0000250" key="1"/>
<evidence type="ECO:0000250" key="2">
    <source>
        <dbReference type="UniProtKB" id="P51151"/>
    </source>
</evidence>
<evidence type="ECO:0000250" key="3">
    <source>
        <dbReference type="UniProtKB" id="P62820"/>
    </source>
</evidence>
<evidence type="ECO:0000250" key="4">
    <source>
        <dbReference type="UniProtKB" id="Q8BHH2"/>
    </source>
</evidence>
<evidence type="ECO:0000250" key="5">
    <source>
        <dbReference type="UniProtKB" id="Q9NP90"/>
    </source>
</evidence>
<evidence type="ECO:0000305" key="6"/>